<comment type="function">
    <text evidence="1">Catalyzes the transfer of the gamma-phosphate of ATP to D-galactose to form alpha-D-galactose-1-phosphate (Gal-1-P).</text>
</comment>
<comment type="catalytic activity">
    <reaction evidence="1">
        <text>alpha-D-galactose + ATP = alpha-D-galactose 1-phosphate + ADP + H(+)</text>
        <dbReference type="Rhea" id="RHEA:13553"/>
        <dbReference type="ChEBI" id="CHEBI:15378"/>
        <dbReference type="ChEBI" id="CHEBI:28061"/>
        <dbReference type="ChEBI" id="CHEBI:30616"/>
        <dbReference type="ChEBI" id="CHEBI:58336"/>
        <dbReference type="ChEBI" id="CHEBI:456216"/>
        <dbReference type="EC" id="2.7.1.6"/>
    </reaction>
</comment>
<comment type="pathway">
    <text evidence="1">Carbohydrate metabolism; galactose metabolism.</text>
</comment>
<comment type="subcellular location">
    <subcellularLocation>
        <location evidence="1">Cytoplasm</location>
    </subcellularLocation>
</comment>
<comment type="similarity">
    <text evidence="1">Belongs to the GHMP kinase family. GalK subfamily.</text>
</comment>
<proteinExistence type="inferred from homology"/>
<feature type="chain" id="PRO_1000005769" description="Galactokinase">
    <location>
        <begin position="1"/>
        <end position="350"/>
    </location>
</feature>
<feature type="active site" description="Proton acceptor" evidence="1">
    <location>
        <position position="146"/>
    </location>
</feature>
<feature type="binding site" evidence="1">
    <location>
        <begin position="14"/>
        <end position="17"/>
    </location>
    <ligand>
        <name>substrate</name>
    </ligand>
</feature>
<feature type="binding site" evidence="1">
    <location>
        <position position="46"/>
    </location>
    <ligand>
        <name>ATP</name>
        <dbReference type="ChEBI" id="CHEBI:30616"/>
    </ligand>
</feature>
<feature type="binding site" evidence="1">
    <location>
        <begin position="96"/>
        <end position="102"/>
    </location>
    <ligand>
        <name>ATP</name>
        <dbReference type="ChEBI" id="CHEBI:30616"/>
    </ligand>
</feature>
<feature type="binding site" evidence="1">
    <location>
        <position position="102"/>
    </location>
    <ligand>
        <name>Mg(2+)</name>
        <dbReference type="ChEBI" id="CHEBI:18420"/>
    </ligand>
</feature>
<feature type="binding site" evidence="1">
    <location>
        <position position="134"/>
    </location>
    <ligand>
        <name>Mg(2+)</name>
        <dbReference type="ChEBI" id="CHEBI:18420"/>
    </ligand>
</feature>
<feature type="binding site" evidence="1">
    <location>
        <position position="196"/>
    </location>
    <ligand>
        <name>substrate</name>
    </ligand>
</feature>
<feature type="site" description="Transition state stabilizer" evidence="1">
    <location>
        <position position="8"/>
    </location>
</feature>
<evidence type="ECO:0000255" key="1">
    <source>
        <dbReference type="HAMAP-Rule" id="MF_00246"/>
    </source>
</evidence>
<reference key="1">
    <citation type="submission" date="2007-05" db="EMBL/GenBank/DDBJ databases">
        <title>Complete sequence of Thermotoga petrophila RKU-1.</title>
        <authorList>
            <consortium name="US DOE Joint Genome Institute"/>
            <person name="Copeland A."/>
            <person name="Lucas S."/>
            <person name="Lapidus A."/>
            <person name="Barry K."/>
            <person name="Glavina del Rio T."/>
            <person name="Dalin E."/>
            <person name="Tice H."/>
            <person name="Pitluck S."/>
            <person name="Sims D."/>
            <person name="Brettin T."/>
            <person name="Bruce D."/>
            <person name="Detter J.C."/>
            <person name="Han C."/>
            <person name="Tapia R."/>
            <person name="Schmutz J."/>
            <person name="Larimer F."/>
            <person name="Land M."/>
            <person name="Hauser L."/>
            <person name="Kyrpides N."/>
            <person name="Mikhailova N."/>
            <person name="Nelson K."/>
            <person name="Gogarten J.P."/>
            <person name="Noll K."/>
            <person name="Richardson P."/>
        </authorList>
    </citation>
    <scope>NUCLEOTIDE SEQUENCE [LARGE SCALE GENOMIC DNA]</scope>
    <source>
        <strain>ATCC BAA-488 / DSM 13995 / JCM 10881 / RKU-1</strain>
    </source>
</reference>
<organism>
    <name type="scientific">Thermotoga petrophila (strain ATCC BAA-488 / DSM 13995 / JCM 10881 / RKU-1)</name>
    <dbReference type="NCBI Taxonomy" id="390874"/>
    <lineage>
        <taxon>Bacteria</taxon>
        <taxon>Thermotogati</taxon>
        <taxon>Thermotogota</taxon>
        <taxon>Thermotogae</taxon>
        <taxon>Thermotogales</taxon>
        <taxon>Thermotogaceae</taxon>
        <taxon>Thermotoga</taxon>
    </lineage>
</organism>
<keyword id="KW-0067">ATP-binding</keyword>
<keyword id="KW-0119">Carbohydrate metabolism</keyword>
<keyword id="KW-0963">Cytoplasm</keyword>
<keyword id="KW-0299">Galactose metabolism</keyword>
<keyword id="KW-0418">Kinase</keyword>
<keyword id="KW-0460">Magnesium</keyword>
<keyword id="KW-0479">Metal-binding</keyword>
<keyword id="KW-0547">Nucleotide-binding</keyword>
<keyword id="KW-0808">Transferase</keyword>
<sequence>MKVKAPGRINIIGEHTDYNDGYVLPFAVNRYVFLSIEGSDRFIFHSENVNETVEMEKIEKLNKWTDYISGVIASFEKRGYRVSPVKISVSSNLPMGAGLSSSAALEVATAYAISEYFSFNVPKLELVKIAREAEVEFVGVRCGIMDQFTSAFGKKDHAIFLDTMTLEYEYVPLRLEGYEINLVDSNVKHELSSSEYNKRRQECEEVLKTLGKKSFREVTKEDLERLSGTLRKRAQHVLEENERVLKSVQALKEGDFETLGKLLFSSHESLRDLYEVSCEETDFIVDYLRGKEGILGARMVGGGFGGGVIVLSKKGAFGKIKEELVESYKKHFGIDLTFHEIESSDGVQKI</sequence>
<dbReference type="EC" id="2.7.1.6" evidence="1"/>
<dbReference type="EMBL" id="CP000702">
    <property type="protein sequence ID" value="ABQ47569.1"/>
    <property type="molecule type" value="Genomic_DNA"/>
</dbReference>
<dbReference type="RefSeq" id="WP_011943983.1">
    <property type="nucleotide sequence ID" value="NC_009486.1"/>
</dbReference>
<dbReference type="SMR" id="A5IMZ6"/>
<dbReference type="STRING" id="390874.Tpet_1562"/>
<dbReference type="KEGG" id="tpt:Tpet_1562"/>
<dbReference type="eggNOG" id="COG0153">
    <property type="taxonomic scope" value="Bacteria"/>
</dbReference>
<dbReference type="HOGENOM" id="CLU_017814_2_1_0"/>
<dbReference type="UniPathway" id="UPA00214"/>
<dbReference type="Proteomes" id="UP000006558">
    <property type="component" value="Chromosome"/>
</dbReference>
<dbReference type="GO" id="GO:0005829">
    <property type="term" value="C:cytosol"/>
    <property type="evidence" value="ECO:0007669"/>
    <property type="project" value="TreeGrafter"/>
</dbReference>
<dbReference type="GO" id="GO:0005524">
    <property type="term" value="F:ATP binding"/>
    <property type="evidence" value="ECO:0007669"/>
    <property type="project" value="UniProtKB-UniRule"/>
</dbReference>
<dbReference type="GO" id="GO:0004335">
    <property type="term" value="F:galactokinase activity"/>
    <property type="evidence" value="ECO:0007669"/>
    <property type="project" value="UniProtKB-UniRule"/>
</dbReference>
<dbReference type="GO" id="GO:0000287">
    <property type="term" value="F:magnesium ion binding"/>
    <property type="evidence" value="ECO:0007669"/>
    <property type="project" value="UniProtKB-UniRule"/>
</dbReference>
<dbReference type="GO" id="GO:0006012">
    <property type="term" value="P:galactose metabolic process"/>
    <property type="evidence" value="ECO:0007669"/>
    <property type="project" value="UniProtKB-UniRule"/>
</dbReference>
<dbReference type="FunFam" id="3.30.230.10:FF:000126">
    <property type="entry name" value="Galactokinase"/>
    <property type="match status" value="1"/>
</dbReference>
<dbReference type="FunFam" id="3.30.70.890:FF:000001">
    <property type="entry name" value="Galactokinase"/>
    <property type="match status" value="1"/>
</dbReference>
<dbReference type="Gene3D" id="3.30.230.10">
    <property type="match status" value="1"/>
</dbReference>
<dbReference type="Gene3D" id="3.30.70.890">
    <property type="entry name" value="GHMP kinase, C-terminal domain"/>
    <property type="match status" value="1"/>
</dbReference>
<dbReference type="HAMAP" id="MF_00246">
    <property type="entry name" value="Galactokinase"/>
    <property type="match status" value="1"/>
</dbReference>
<dbReference type="InterPro" id="IPR000705">
    <property type="entry name" value="Galactokinase"/>
</dbReference>
<dbReference type="InterPro" id="IPR022963">
    <property type="entry name" value="Galactokinase_bac"/>
</dbReference>
<dbReference type="InterPro" id="IPR019741">
    <property type="entry name" value="Galactokinase_CS"/>
</dbReference>
<dbReference type="InterPro" id="IPR019539">
    <property type="entry name" value="GalKase_N"/>
</dbReference>
<dbReference type="InterPro" id="IPR013750">
    <property type="entry name" value="GHMP_kinase_C_dom"/>
</dbReference>
<dbReference type="InterPro" id="IPR036554">
    <property type="entry name" value="GHMP_kinase_C_sf"/>
</dbReference>
<dbReference type="InterPro" id="IPR006204">
    <property type="entry name" value="GHMP_kinase_N_dom"/>
</dbReference>
<dbReference type="InterPro" id="IPR006203">
    <property type="entry name" value="GHMP_knse_ATP-bd_CS"/>
</dbReference>
<dbReference type="InterPro" id="IPR006206">
    <property type="entry name" value="Mevalonate/galactokinase"/>
</dbReference>
<dbReference type="InterPro" id="IPR020568">
    <property type="entry name" value="Ribosomal_Su5_D2-typ_SF"/>
</dbReference>
<dbReference type="InterPro" id="IPR014721">
    <property type="entry name" value="Ribsml_uS5_D2-typ_fold_subgr"/>
</dbReference>
<dbReference type="NCBIfam" id="TIGR00131">
    <property type="entry name" value="gal_kin"/>
    <property type="match status" value="1"/>
</dbReference>
<dbReference type="NCBIfam" id="NF003006">
    <property type="entry name" value="PRK03817.1"/>
    <property type="match status" value="1"/>
</dbReference>
<dbReference type="PANTHER" id="PTHR10457:SF7">
    <property type="entry name" value="GALACTOKINASE-RELATED"/>
    <property type="match status" value="1"/>
</dbReference>
<dbReference type="PANTHER" id="PTHR10457">
    <property type="entry name" value="MEVALONATE KINASE/GALACTOKINASE"/>
    <property type="match status" value="1"/>
</dbReference>
<dbReference type="Pfam" id="PF10509">
    <property type="entry name" value="GalKase_gal_bdg"/>
    <property type="match status" value="1"/>
</dbReference>
<dbReference type="Pfam" id="PF08544">
    <property type="entry name" value="GHMP_kinases_C"/>
    <property type="match status" value="1"/>
</dbReference>
<dbReference type="Pfam" id="PF00288">
    <property type="entry name" value="GHMP_kinases_N"/>
    <property type="match status" value="1"/>
</dbReference>
<dbReference type="PIRSF" id="PIRSF000530">
    <property type="entry name" value="Galactokinase"/>
    <property type="match status" value="1"/>
</dbReference>
<dbReference type="PRINTS" id="PR00473">
    <property type="entry name" value="GALCTOKINASE"/>
</dbReference>
<dbReference type="PRINTS" id="PR00959">
    <property type="entry name" value="MEVGALKINASE"/>
</dbReference>
<dbReference type="SUPFAM" id="SSF55060">
    <property type="entry name" value="GHMP Kinase, C-terminal domain"/>
    <property type="match status" value="1"/>
</dbReference>
<dbReference type="SUPFAM" id="SSF54211">
    <property type="entry name" value="Ribosomal protein S5 domain 2-like"/>
    <property type="match status" value="1"/>
</dbReference>
<dbReference type="PROSITE" id="PS00106">
    <property type="entry name" value="GALACTOKINASE"/>
    <property type="match status" value="1"/>
</dbReference>
<dbReference type="PROSITE" id="PS00627">
    <property type="entry name" value="GHMP_KINASES_ATP"/>
    <property type="match status" value="1"/>
</dbReference>
<name>GAL1_THEP1</name>
<accession>A5IMZ6</accession>
<protein>
    <recommendedName>
        <fullName evidence="1">Galactokinase</fullName>
        <ecNumber evidence="1">2.7.1.6</ecNumber>
    </recommendedName>
    <alternativeName>
        <fullName evidence="1">Galactose kinase</fullName>
    </alternativeName>
</protein>
<gene>
    <name evidence="1" type="primary">galK</name>
    <name type="ordered locus">Tpet_1562</name>
</gene>